<proteinExistence type="inferred from homology"/>
<accession>Q63EG2</accession>
<keyword id="KW-0342">GTP-binding</keyword>
<keyword id="KW-0378">Hydrolase</keyword>
<keyword id="KW-0533">Nickel</keyword>
<keyword id="KW-0547">Nucleotide-binding</keyword>
<comment type="function">
    <text evidence="1">Asymmetrically hydrolyzes Ap4p to yield AMP and ATP.</text>
</comment>
<comment type="catalytic activity">
    <reaction evidence="1">
        <text>P(1),P(4)-bis(5'-guanosyl) tetraphosphate + H2O = GMP + GTP + 2 H(+)</text>
        <dbReference type="Rhea" id="RHEA:22484"/>
        <dbReference type="ChEBI" id="CHEBI:15377"/>
        <dbReference type="ChEBI" id="CHEBI:15378"/>
        <dbReference type="ChEBI" id="CHEBI:37565"/>
        <dbReference type="ChEBI" id="CHEBI:57553"/>
        <dbReference type="ChEBI" id="CHEBI:58115"/>
        <dbReference type="EC" id="3.6.1.17"/>
    </reaction>
</comment>
<comment type="cofactor">
    <cofactor evidence="1">
        <name>Ni(2+)</name>
        <dbReference type="ChEBI" id="CHEBI:49786"/>
    </cofactor>
</comment>
<comment type="similarity">
    <text evidence="1">Belongs to the PrpE family.</text>
</comment>
<evidence type="ECO:0000255" key="1">
    <source>
        <dbReference type="HAMAP-Rule" id="MF_01443"/>
    </source>
</evidence>
<gene>
    <name evidence="1" type="primary">prpE</name>
    <name type="ordered locus">BCE33L1099</name>
</gene>
<name>PRPE_BACCZ</name>
<dbReference type="EC" id="3.6.1.17" evidence="1"/>
<dbReference type="EMBL" id="CP000001">
    <property type="protein sequence ID" value="AAU19147.1"/>
    <property type="molecule type" value="Genomic_DNA"/>
</dbReference>
<dbReference type="RefSeq" id="WP_000872721.1">
    <property type="nucleotide sequence ID" value="NZ_CP009968.1"/>
</dbReference>
<dbReference type="SMR" id="Q63EG2"/>
<dbReference type="KEGG" id="bcz:BCE33L1099"/>
<dbReference type="PATRIC" id="fig|288681.22.peg.4464"/>
<dbReference type="Proteomes" id="UP000002612">
    <property type="component" value="Chromosome"/>
</dbReference>
<dbReference type="GO" id="GO:0005737">
    <property type="term" value="C:cytoplasm"/>
    <property type="evidence" value="ECO:0007669"/>
    <property type="project" value="TreeGrafter"/>
</dbReference>
<dbReference type="GO" id="GO:0004081">
    <property type="term" value="F:bis(5'-nucleosyl)-tetraphosphatase (asymmetrical) activity"/>
    <property type="evidence" value="ECO:0007669"/>
    <property type="project" value="UniProtKB-UniRule"/>
</dbReference>
<dbReference type="GO" id="GO:0005525">
    <property type="term" value="F:GTP binding"/>
    <property type="evidence" value="ECO:0007669"/>
    <property type="project" value="UniProtKB-KW"/>
</dbReference>
<dbReference type="GO" id="GO:0016151">
    <property type="term" value="F:nickel cation binding"/>
    <property type="evidence" value="ECO:0007669"/>
    <property type="project" value="UniProtKB-UniRule"/>
</dbReference>
<dbReference type="GO" id="GO:0016791">
    <property type="term" value="F:phosphatase activity"/>
    <property type="evidence" value="ECO:0007669"/>
    <property type="project" value="TreeGrafter"/>
</dbReference>
<dbReference type="CDD" id="cd07423">
    <property type="entry name" value="MPP_Prp_like"/>
    <property type="match status" value="1"/>
</dbReference>
<dbReference type="Gene3D" id="3.60.21.10">
    <property type="match status" value="1"/>
</dbReference>
<dbReference type="HAMAP" id="MF_01443">
    <property type="entry name" value="PrpE"/>
    <property type="match status" value="1"/>
</dbReference>
<dbReference type="InterPro" id="IPR050126">
    <property type="entry name" value="Ap4A_hydrolase"/>
</dbReference>
<dbReference type="InterPro" id="IPR023937">
    <property type="entry name" value="Bis(5'-nucleosyl)-tetraP_PrpE"/>
</dbReference>
<dbReference type="InterPro" id="IPR004843">
    <property type="entry name" value="Calcineurin-like_PHP_ApaH"/>
</dbReference>
<dbReference type="InterPro" id="IPR029052">
    <property type="entry name" value="Metallo-depent_PP-like"/>
</dbReference>
<dbReference type="InterPro" id="IPR041780">
    <property type="entry name" value="MPP_PrpE-like"/>
</dbReference>
<dbReference type="NCBIfam" id="NF010148">
    <property type="entry name" value="PRK13625.1"/>
    <property type="match status" value="1"/>
</dbReference>
<dbReference type="PANTHER" id="PTHR42850:SF7">
    <property type="entry name" value="BIS(5'-NUCLEOSYL)-TETRAPHOSPHATASE PRPE [ASYMMETRICAL]"/>
    <property type="match status" value="1"/>
</dbReference>
<dbReference type="PANTHER" id="PTHR42850">
    <property type="entry name" value="METALLOPHOSPHOESTERASE"/>
    <property type="match status" value="1"/>
</dbReference>
<dbReference type="Pfam" id="PF00149">
    <property type="entry name" value="Metallophos"/>
    <property type="match status" value="1"/>
</dbReference>
<dbReference type="SUPFAM" id="SSF56300">
    <property type="entry name" value="Metallo-dependent phosphatases"/>
    <property type="match status" value="1"/>
</dbReference>
<feature type="chain" id="PRO_0000297698" description="Bis(5'-nucleosyl)-tetraphosphatase PrpE [asymmetrical]">
    <location>
        <begin position="1"/>
        <end position="246"/>
    </location>
</feature>
<protein>
    <recommendedName>
        <fullName evidence="1">Bis(5'-nucleosyl)-tetraphosphatase PrpE [asymmetrical]</fullName>
        <ecNumber evidence="1">3.6.1.17</ecNumber>
    </recommendedName>
    <alternativeName>
        <fullName evidence="1">Ap4A hydrolase</fullName>
    </alternativeName>
    <alternativeName>
        <fullName evidence="1">Diadenosine 5',5'''-P1,P4-tetraphosphate asymmetrical hydrolase</fullName>
        <shortName evidence="1">Diadenosine tetraphosphatase</shortName>
    </alternativeName>
</protein>
<organism>
    <name type="scientific">Bacillus cereus (strain ZK / E33L)</name>
    <dbReference type="NCBI Taxonomy" id="288681"/>
    <lineage>
        <taxon>Bacteria</taxon>
        <taxon>Bacillati</taxon>
        <taxon>Bacillota</taxon>
        <taxon>Bacilli</taxon>
        <taxon>Bacillales</taxon>
        <taxon>Bacillaceae</taxon>
        <taxon>Bacillus</taxon>
        <taxon>Bacillus cereus group</taxon>
    </lineage>
</organism>
<sequence length="246" mass="28213">MKYDIIGDIHGCLQEFQNLTEKLGYNWSSGLPVHPDQRKLAFVGDITDRGPHSLRMIEIVWELVIHKKVAYYAPGNHCNKLYRFFLGRNVTIAHGLETTVAEYEALPSHKQNMIKEKFITLYEQSPLYHVLDEKRLLVCHAGIRQDYIGRQDKKVQTFVLYGDITGEKHADGSPVRRDWAKEYKGTTWIVYGHTPVKEPRFVNHTVNIDTGAVFGGKLTGLRYPEMETVSVPSSLPFVPEKFRPIS</sequence>
<reference key="1">
    <citation type="journal article" date="2006" name="J. Bacteriol.">
        <title>Pathogenomic sequence analysis of Bacillus cereus and Bacillus thuringiensis isolates closely related to Bacillus anthracis.</title>
        <authorList>
            <person name="Han C.S."/>
            <person name="Xie G."/>
            <person name="Challacombe J.F."/>
            <person name="Altherr M.R."/>
            <person name="Bhotika S.S."/>
            <person name="Bruce D."/>
            <person name="Campbell C.S."/>
            <person name="Campbell M.L."/>
            <person name="Chen J."/>
            <person name="Chertkov O."/>
            <person name="Cleland C."/>
            <person name="Dimitrijevic M."/>
            <person name="Doggett N.A."/>
            <person name="Fawcett J.J."/>
            <person name="Glavina T."/>
            <person name="Goodwin L.A."/>
            <person name="Hill K.K."/>
            <person name="Hitchcock P."/>
            <person name="Jackson P.J."/>
            <person name="Keim P."/>
            <person name="Kewalramani A.R."/>
            <person name="Longmire J."/>
            <person name="Lucas S."/>
            <person name="Malfatti S."/>
            <person name="McMurry K."/>
            <person name="Meincke L.J."/>
            <person name="Misra M."/>
            <person name="Moseman B.L."/>
            <person name="Mundt M."/>
            <person name="Munk A.C."/>
            <person name="Okinaka R.T."/>
            <person name="Parson-Quintana B."/>
            <person name="Reilly L.P."/>
            <person name="Richardson P."/>
            <person name="Robinson D.L."/>
            <person name="Rubin E."/>
            <person name="Saunders E."/>
            <person name="Tapia R."/>
            <person name="Tesmer J.G."/>
            <person name="Thayer N."/>
            <person name="Thompson L.S."/>
            <person name="Tice H."/>
            <person name="Ticknor L.O."/>
            <person name="Wills P.L."/>
            <person name="Brettin T.S."/>
            <person name="Gilna P."/>
        </authorList>
    </citation>
    <scope>NUCLEOTIDE SEQUENCE [LARGE SCALE GENOMIC DNA]</scope>
    <source>
        <strain>ZK / E33L</strain>
    </source>
</reference>